<dbReference type="EMBL" id="CP001612">
    <property type="protein sequence ID" value="ACP53749.1"/>
    <property type="molecule type" value="Genomic_DNA"/>
</dbReference>
<dbReference type="RefSeq" id="WP_004997827.1">
    <property type="nucleotide sequence ID" value="NC_012633.1"/>
</dbReference>
<dbReference type="SMR" id="C3PP89"/>
<dbReference type="GeneID" id="95361468"/>
<dbReference type="KEGG" id="raf:RAF_ORF0894"/>
<dbReference type="HOGENOM" id="CLU_131047_1_5_5"/>
<dbReference type="Proteomes" id="UP000002305">
    <property type="component" value="Chromosome"/>
</dbReference>
<dbReference type="GO" id="GO:0022625">
    <property type="term" value="C:cytosolic large ribosomal subunit"/>
    <property type="evidence" value="ECO:0007669"/>
    <property type="project" value="TreeGrafter"/>
</dbReference>
<dbReference type="GO" id="GO:0003735">
    <property type="term" value="F:structural constituent of ribosome"/>
    <property type="evidence" value="ECO:0007669"/>
    <property type="project" value="InterPro"/>
</dbReference>
<dbReference type="GO" id="GO:0006412">
    <property type="term" value="P:translation"/>
    <property type="evidence" value="ECO:0007669"/>
    <property type="project" value="UniProtKB-UniRule"/>
</dbReference>
<dbReference type="CDD" id="cd01658">
    <property type="entry name" value="Ribosomal_L30"/>
    <property type="match status" value="1"/>
</dbReference>
<dbReference type="Gene3D" id="3.30.1390.20">
    <property type="entry name" value="Ribosomal protein L30, ferredoxin-like fold domain"/>
    <property type="match status" value="1"/>
</dbReference>
<dbReference type="HAMAP" id="MF_01371_B">
    <property type="entry name" value="Ribosomal_uL30_B"/>
    <property type="match status" value="1"/>
</dbReference>
<dbReference type="InterPro" id="IPR036919">
    <property type="entry name" value="Ribo_uL30_ferredoxin-like_sf"/>
</dbReference>
<dbReference type="InterPro" id="IPR005996">
    <property type="entry name" value="Ribosomal_uL30_bac-type"/>
</dbReference>
<dbReference type="InterPro" id="IPR016082">
    <property type="entry name" value="Ribosomal_uL30_ferredoxin-like"/>
</dbReference>
<dbReference type="NCBIfam" id="TIGR01308">
    <property type="entry name" value="rpmD_bact"/>
    <property type="match status" value="1"/>
</dbReference>
<dbReference type="PANTHER" id="PTHR15892:SF2">
    <property type="entry name" value="LARGE RIBOSOMAL SUBUNIT PROTEIN UL30M"/>
    <property type="match status" value="1"/>
</dbReference>
<dbReference type="PANTHER" id="PTHR15892">
    <property type="entry name" value="MITOCHONDRIAL RIBOSOMAL PROTEIN L30"/>
    <property type="match status" value="1"/>
</dbReference>
<dbReference type="Pfam" id="PF00327">
    <property type="entry name" value="Ribosomal_L30"/>
    <property type="match status" value="1"/>
</dbReference>
<dbReference type="PIRSF" id="PIRSF002211">
    <property type="entry name" value="Ribosomal_L30_bac-type"/>
    <property type="match status" value="1"/>
</dbReference>
<dbReference type="SUPFAM" id="SSF55129">
    <property type="entry name" value="Ribosomal protein L30p/L7e"/>
    <property type="match status" value="1"/>
</dbReference>
<gene>
    <name evidence="1" type="primary">rpmD</name>
    <name type="ordered locus">RAF_ORF0894</name>
</gene>
<sequence>MNNKINNIKITQVHSAIGRKYDQRLILVGLGLNKINKSVILANTNSIKGMVNKVKHLLKIENM</sequence>
<evidence type="ECO:0000255" key="1">
    <source>
        <dbReference type="HAMAP-Rule" id="MF_01371"/>
    </source>
</evidence>
<evidence type="ECO:0000305" key="2"/>
<feature type="chain" id="PRO_1000215072" description="Large ribosomal subunit protein uL30">
    <location>
        <begin position="1"/>
        <end position="63"/>
    </location>
</feature>
<name>RL30_RICAE</name>
<reference key="1">
    <citation type="journal article" date="2009" name="BMC Genomics">
        <title>Analysis of the Rickettsia africae genome reveals that virulence acquisition in Rickettsia species may be explained by genome reduction.</title>
        <authorList>
            <person name="Fournier P.-E."/>
            <person name="El Karkouri K."/>
            <person name="Leroy Q."/>
            <person name="Robert C."/>
            <person name="Giumelli B."/>
            <person name="Renesto P."/>
            <person name="Socolovschi C."/>
            <person name="Parola P."/>
            <person name="Audic S."/>
            <person name="Raoult D."/>
        </authorList>
    </citation>
    <scope>NUCLEOTIDE SEQUENCE [LARGE SCALE GENOMIC DNA]</scope>
    <source>
        <strain>ESF-5</strain>
    </source>
</reference>
<organism>
    <name type="scientific">Rickettsia africae (strain ESF-5)</name>
    <dbReference type="NCBI Taxonomy" id="347255"/>
    <lineage>
        <taxon>Bacteria</taxon>
        <taxon>Pseudomonadati</taxon>
        <taxon>Pseudomonadota</taxon>
        <taxon>Alphaproteobacteria</taxon>
        <taxon>Rickettsiales</taxon>
        <taxon>Rickettsiaceae</taxon>
        <taxon>Rickettsieae</taxon>
        <taxon>Rickettsia</taxon>
        <taxon>spotted fever group</taxon>
    </lineage>
</organism>
<keyword id="KW-0687">Ribonucleoprotein</keyword>
<keyword id="KW-0689">Ribosomal protein</keyword>
<proteinExistence type="inferred from homology"/>
<comment type="subunit">
    <text evidence="1">Part of the 50S ribosomal subunit.</text>
</comment>
<comment type="similarity">
    <text evidence="1">Belongs to the universal ribosomal protein uL30 family.</text>
</comment>
<accession>C3PP89</accession>
<protein>
    <recommendedName>
        <fullName evidence="1">Large ribosomal subunit protein uL30</fullName>
    </recommendedName>
    <alternativeName>
        <fullName evidence="2">50S ribosomal protein L30</fullName>
    </alternativeName>
</protein>